<accession>Q6N6U0</accession>
<organism>
    <name type="scientific">Rhodopseudomonas palustris (strain ATCC BAA-98 / CGA009)</name>
    <dbReference type="NCBI Taxonomy" id="258594"/>
    <lineage>
        <taxon>Bacteria</taxon>
        <taxon>Pseudomonadati</taxon>
        <taxon>Pseudomonadota</taxon>
        <taxon>Alphaproteobacteria</taxon>
        <taxon>Hyphomicrobiales</taxon>
        <taxon>Nitrobacteraceae</taxon>
        <taxon>Rhodopseudomonas</taxon>
    </lineage>
</organism>
<dbReference type="EC" id="2.3.1.286" evidence="1 2"/>
<dbReference type="EMBL" id="BX572601">
    <property type="protein sequence ID" value="CAE27965.1"/>
    <property type="molecule type" value="Genomic_DNA"/>
</dbReference>
<dbReference type="RefSeq" id="WP_011158074.1">
    <property type="nucleotide sequence ID" value="NZ_CP116810.1"/>
</dbReference>
<dbReference type="SMR" id="Q6N6U0"/>
<dbReference type="STRING" id="258594.RPA2524"/>
<dbReference type="GeneID" id="66893586"/>
<dbReference type="eggNOG" id="COG0846">
    <property type="taxonomic scope" value="Bacteria"/>
</dbReference>
<dbReference type="HOGENOM" id="CLU_023643_3_0_5"/>
<dbReference type="PhylomeDB" id="Q6N6U0"/>
<dbReference type="GO" id="GO:0005737">
    <property type="term" value="C:cytoplasm"/>
    <property type="evidence" value="ECO:0007669"/>
    <property type="project" value="UniProtKB-SubCell"/>
</dbReference>
<dbReference type="GO" id="GO:0017136">
    <property type="term" value="F:histone deacetylase activity, NAD-dependent"/>
    <property type="evidence" value="ECO:0007669"/>
    <property type="project" value="TreeGrafter"/>
</dbReference>
<dbReference type="GO" id="GO:0070403">
    <property type="term" value="F:NAD+ binding"/>
    <property type="evidence" value="ECO:0007669"/>
    <property type="project" value="UniProtKB-UniRule"/>
</dbReference>
<dbReference type="GO" id="GO:0008270">
    <property type="term" value="F:zinc ion binding"/>
    <property type="evidence" value="ECO:0007669"/>
    <property type="project" value="UniProtKB-UniRule"/>
</dbReference>
<dbReference type="Gene3D" id="2.20.28.200">
    <property type="match status" value="1"/>
</dbReference>
<dbReference type="Gene3D" id="3.40.50.1220">
    <property type="entry name" value="TPP-binding domain"/>
    <property type="match status" value="1"/>
</dbReference>
<dbReference type="HAMAP" id="MF_01968">
    <property type="entry name" value="Sirtuin_ClassU"/>
    <property type="match status" value="1"/>
</dbReference>
<dbReference type="InterPro" id="IPR029035">
    <property type="entry name" value="DHS-like_NAD/FAD-binding_dom"/>
</dbReference>
<dbReference type="InterPro" id="IPR050134">
    <property type="entry name" value="NAD-dep_sirtuin_deacylases"/>
</dbReference>
<dbReference type="InterPro" id="IPR003000">
    <property type="entry name" value="Sirtuin"/>
</dbReference>
<dbReference type="InterPro" id="IPR028628">
    <property type="entry name" value="Sirtuin_class_U"/>
</dbReference>
<dbReference type="InterPro" id="IPR026590">
    <property type="entry name" value="Ssirtuin_cat_dom"/>
</dbReference>
<dbReference type="PANTHER" id="PTHR11085:SF4">
    <property type="entry name" value="NAD-DEPENDENT PROTEIN DEACYLASE"/>
    <property type="match status" value="1"/>
</dbReference>
<dbReference type="PANTHER" id="PTHR11085">
    <property type="entry name" value="NAD-DEPENDENT PROTEIN DEACYLASE SIRTUIN-5, MITOCHONDRIAL-RELATED"/>
    <property type="match status" value="1"/>
</dbReference>
<dbReference type="Pfam" id="PF02146">
    <property type="entry name" value="SIR2"/>
    <property type="match status" value="1"/>
</dbReference>
<dbReference type="SUPFAM" id="SSF52467">
    <property type="entry name" value="DHS-like NAD/FAD-binding domain"/>
    <property type="match status" value="1"/>
</dbReference>
<dbReference type="PROSITE" id="PS50305">
    <property type="entry name" value="SIRTUIN"/>
    <property type="match status" value="1"/>
</dbReference>
<comment type="function">
    <text evidence="1">NAD-dependent protein deacetylase which modulates the activities of several enzymes which are inactive in their acetylated form.</text>
</comment>
<comment type="catalytic activity">
    <reaction evidence="1">
        <text>N(6)-acetyl-L-lysyl-[protein] + NAD(+) + H2O = 2''-O-acetyl-ADP-D-ribose + nicotinamide + L-lysyl-[protein]</text>
        <dbReference type="Rhea" id="RHEA:43636"/>
        <dbReference type="Rhea" id="RHEA-COMP:9752"/>
        <dbReference type="Rhea" id="RHEA-COMP:10731"/>
        <dbReference type="ChEBI" id="CHEBI:15377"/>
        <dbReference type="ChEBI" id="CHEBI:17154"/>
        <dbReference type="ChEBI" id="CHEBI:29969"/>
        <dbReference type="ChEBI" id="CHEBI:57540"/>
        <dbReference type="ChEBI" id="CHEBI:61930"/>
        <dbReference type="ChEBI" id="CHEBI:83767"/>
        <dbReference type="EC" id="2.3.1.286"/>
    </reaction>
</comment>
<comment type="cofactor">
    <cofactor evidence="1">
        <name>Zn(2+)</name>
        <dbReference type="ChEBI" id="CHEBI:29105"/>
    </cofactor>
    <text evidence="1">Binds 1 zinc ion per subunit.</text>
</comment>
<comment type="subcellular location">
    <subcellularLocation>
        <location evidence="1">Cytoplasm</location>
    </subcellularLocation>
</comment>
<comment type="similarity">
    <text evidence="1">Belongs to the sirtuin family. Class U subfamily.</text>
</comment>
<reference key="1">
    <citation type="journal article" date="2004" name="Nat. Biotechnol.">
        <title>Complete genome sequence of the metabolically versatile photosynthetic bacterium Rhodopseudomonas palustris.</title>
        <authorList>
            <person name="Larimer F.W."/>
            <person name="Chain P."/>
            <person name="Hauser L."/>
            <person name="Lamerdin J.E."/>
            <person name="Malfatti S."/>
            <person name="Do L."/>
            <person name="Land M.L."/>
            <person name="Pelletier D.A."/>
            <person name="Beatty J.T."/>
            <person name="Lang A.S."/>
            <person name="Tabita F.R."/>
            <person name="Gibson J.L."/>
            <person name="Hanson T.E."/>
            <person name="Bobst C."/>
            <person name="Torres y Torres J.L."/>
            <person name="Peres C."/>
            <person name="Harrison F.H."/>
            <person name="Gibson J."/>
            <person name="Harwood C.S."/>
        </authorList>
    </citation>
    <scope>NUCLEOTIDE SEQUENCE [LARGE SCALE GENOMIC DNA]</scope>
    <source>
        <strain>ATCC BAA-98 / CGA009</strain>
    </source>
</reference>
<proteinExistence type="inferred from homology"/>
<keyword id="KW-0963">Cytoplasm</keyword>
<keyword id="KW-0479">Metal-binding</keyword>
<keyword id="KW-0520">NAD</keyword>
<keyword id="KW-0808">Transferase</keyword>
<keyword id="KW-0862">Zinc</keyword>
<feature type="chain" id="PRO_0000110345" description="NAD-dependent protein deacetylase">
    <location>
        <begin position="1"/>
        <end position="253"/>
    </location>
</feature>
<feature type="domain" description="Deacetylase sirtuin-type" evidence="2">
    <location>
        <begin position="3"/>
        <end position="253"/>
    </location>
</feature>
<feature type="active site" description="Proton acceptor" evidence="2">
    <location>
        <position position="126"/>
    </location>
</feature>
<feature type="binding site" evidence="1">
    <location>
        <position position="29"/>
    </location>
    <ligand>
        <name>NAD(+)</name>
        <dbReference type="ChEBI" id="CHEBI:57540"/>
    </ligand>
</feature>
<feature type="binding site" evidence="1">
    <location>
        <position position="33"/>
    </location>
    <ligand>
        <name>NAD(+)</name>
        <dbReference type="ChEBI" id="CHEBI:57540"/>
    </ligand>
</feature>
<feature type="binding site" evidence="1">
    <location>
        <position position="40"/>
    </location>
    <ligand>
        <name>NAD(+)</name>
        <dbReference type="ChEBI" id="CHEBI:57540"/>
    </ligand>
</feature>
<feature type="binding site" evidence="1">
    <location>
        <position position="40"/>
    </location>
    <ligand>
        <name>nicotinamide</name>
        <dbReference type="ChEBI" id="CHEBI:17154"/>
    </ligand>
</feature>
<feature type="binding site" evidence="1">
    <location>
        <position position="41"/>
    </location>
    <ligand>
        <name>NAD(+)</name>
        <dbReference type="ChEBI" id="CHEBI:57540"/>
    </ligand>
</feature>
<feature type="binding site" evidence="1">
    <location>
        <position position="106"/>
    </location>
    <ligand>
        <name>NAD(+)</name>
        <dbReference type="ChEBI" id="CHEBI:57540"/>
    </ligand>
</feature>
<feature type="binding site" evidence="1">
    <location>
        <position position="108"/>
    </location>
    <ligand>
        <name>NAD(+)</name>
        <dbReference type="ChEBI" id="CHEBI:57540"/>
    </ligand>
</feature>
<feature type="binding site" evidence="1">
    <location>
        <position position="108"/>
    </location>
    <ligand>
        <name>nicotinamide</name>
        <dbReference type="ChEBI" id="CHEBI:17154"/>
    </ligand>
</feature>
<feature type="binding site" evidence="1">
    <location>
        <position position="109"/>
    </location>
    <ligand>
        <name>NAD(+)</name>
        <dbReference type="ChEBI" id="CHEBI:57540"/>
    </ligand>
</feature>
<feature type="binding site" evidence="1">
    <location>
        <position position="109"/>
    </location>
    <ligand>
        <name>nicotinamide</name>
        <dbReference type="ChEBI" id="CHEBI:17154"/>
    </ligand>
</feature>
<feature type="binding site" evidence="1">
    <location>
        <position position="126"/>
    </location>
    <ligand>
        <name>NAD(+)</name>
        <dbReference type="ChEBI" id="CHEBI:57540"/>
    </ligand>
</feature>
<feature type="binding site" evidence="1">
    <location>
        <position position="134"/>
    </location>
    <ligand>
        <name>Zn(2+)</name>
        <dbReference type="ChEBI" id="CHEBI:29105"/>
    </ligand>
</feature>
<feature type="binding site" evidence="1">
    <location>
        <position position="137"/>
    </location>
    <ligand>
        <name>Zn(2+)</name>
        <dbReference type="ChEBI" id="CHEBI:29105"/>
    </ligand>
</feature>
<feature type="binding site" evidence="1">
    <location>
        <position position="159"/>
    </location>
    <ligand>
        <name>Zn(2+)</name>
        <dbReference type="ChEBI" id="CHEBI:29105"/>
    </ligand>
</feature>
<feature type="binding site" evidence="1">
    <location>
        <position position="162"/>
    </location>
    <ligand>
        <name>Zn(2+)</name>
        <dbReference type="ChEBI" id="CHEBI:29105"/>
    </ligand>
</feature>
<feature type="binding site" evidence="1">
    <location>
        <position position="200"/>
    </location>
    <ligand>
        <name>NAD(+)</name>
        <dbReference type="ChEBI" id="CHEBI:57540"/>
    </ligand>
</feature>
<feature type="binding site" evidence="1">
    <location>
        <position position="201"/>
    </location>
    <ligand>
        <name>NAD(+)</name>
        <dbReference type="ChEBI" id="CHEBI:57540"/>
    </ligand>
</feature>
<feature type="binding site" evidence="1">
    <location>
        <position position="225"/>
    </location>
    <ligand>
        <name>NAD(+)</name>
        <dbReference type="ChEBI" id="CHEBI:57540"/>
    </ligand>
</feature>
<feature type="binding site" evidence="1">
    <location>
        <position position="242"/>
    </location>
    <ligand>
        <name>NAD(+)</name>
        <dbReference type="ChEBI" id="CHEBI:57540"/>
    </ligand>
</feature>
<feature type="binding site" evidence="1">
    <location>
        <position position="243"/>
    </location>
    <ligand>
        <name>NAD(+)</name>
        <dbReference type="ChEBI" id="CHEBI:57540"/>
    </ligand>
</feature>
<gene>
    <name evidence="1" type="primary">cobB</name>
    <name type="ordered locus">RPA2524</name>
</gene>
<evidence type="ECO:0000255" key="1">
    <source>
        <dbReference type="HAMAP-Rule" id="MF_01968"/>
    </source>
</evidence>
<evidence type="ECO:0000255" key="2">
    <source>
        <dbReference type="PROSITE-ProRule" id="PRU00236"/>
    </source>
</evidence>
<sequence length="253" mass="27721">MIAPSLSSGVEQLGDMIAHASSIVPFTGAGISTESGIPDFRSPGGLWSRNQPIPFDEFVARQDARDEAWRRRFAMEQTFAKARPARGHRALASLYKAGKVPAIITQNIDNLHQVSGFAEHDVVELHGNTTYARCIGCGKRHELDWVREWFFRTGHAPHCTACDEPVKTATVSFGQSMPSDAMRRATELAQHCDLFIAIGSSLVVWPAAGFPMLAKECGAKLVIINREPTEQDEIADLVIRHDIGETLGPFVGN</sequence>
<name>NPD_RHOPA</name>
<protein>
    <recommendedName>
        <fullName evidence="1">NAD-dependent protein deacetylase</fullName>
        <ecNumber evidence="1 2">2.3.1.286</ecNumber>
    </recommendedName>
    <alternativeName>
        <fullName evidence="1">Regulatory protein SIR2 homolog</fullName>
    </alternativeName>
</protein>